<keyword id="KW-1185">Reference proteome</keyword>
<keyword id="KW-0687">Ribonucleoprotein</keyword>
<keyword id="KW-0689">Ribosomal protein</keyword>
<keyword id="KW-0694">RNA-binding</keyword>
<keyword id="KW-0699">rRNA-binding</keyword>
<keyword id="KW-0820">tRNA-binding</keyword>
<protein>
    <recommendedName>
        <fullName evidence="1">Small ribosomal subunit protein uS13</fullName>
    </recommendedName>
    <alternativeName>
        <fullName evidence="3">30S ribosomal protein S13</fullName>
    </alternativeName>
</protein>
<dbReference type="EMBL" id="CP000155">
    <property type="protein sequence ID" value="ABC32840.1"/>
    <property type="molecule type" value="Genomic_DNA"/>
</dbReference>
<dbReference type="RefSeq" id="WP_011399898.1">
    <property type="nucleotide sequence ID" value="NC_007645.1"/>
</dbReference>
<dbReference type="SMR" id="Q2S934"/>
<dbReference type="STRING" id="349521.HCH_06196"/>
<dbReference type="KEGG" id="hch:HCH_06196"/>
<dbReference type="eggNOG" id="COG0099">
    <property type="taxonomic scope" value="Bacteria"/>
</dbReference>
<dbReference type="HOGENOM" id="CLU_103849_1_2_6"/>
<dbReference type="OrthoDB" id="9803610at2"/>
<dbReference type="Proteomes" id="UP000000238">
    <property type="component" value="Chromosome"/>
</dbReference>
<dbReference type="GO" id="GO:0005829">
    <property type="term" value="C:cytosol"/>
    <property type="evidence" value="ECO:0007669"/>
    <property type="project" value="TreeGrafter"/>
</dbReference>
<dbReference type="GO" id="GO:0015935">
    <property type="term" value="C:small ribosomal subunit"/>
    <property type="evidence" value="ECO:0007669"/>
    <property type="project" value="TreeGrafter"/>
</dbReference>
<dbReference type="GO" id="GO:0019843">
    <property type="term" value="F:rRNA binding"/>
    <property type="evidence" value="ECO:0007669"/>
    <property type="project" value="UniProtKB-UniRule"/>
</dbReference>
<dbReference type="GO" id="GO:0003735">
    <property type="term" value="F:structural constituent of ribosome"/>
    <property type="evidence" value="ECO:0007669"/>
    <property type="project" value="InterPro"/>
</dbReference>
<dbReference type="GO" id="GO:0000049">
    <property type="term" value="F:tRNA binding"/>
    <property type="evidence" value="ECO:0007669"/>
    <property type="project" value="UniProtKB-UniRule"/>
</dbReference>
<dbReference type="GO" id="GO:0006412">
    <property type="term" value="P:translation"/>
    <property type="evidence" value="ECO:0007669"/>
    <property type="project" value="UniProtKB-UniRule"/>
</dbReference>
<dbReference type="FunFam" id="1.10.8.50:FF:000001">
    <property type="entry name" value="30S ribosomal protein S13"/>
    <property type="match status" value="1"/>
</dbReference>
<dbReference type="FunFam" id="4.10.910.10:FF:000001">
    <property type="entry name" value="30S ribosomal protein S13"/>
    <property type="match status" value="1"/>
</dbReference>
<dbReference type="Gene3D" id="1.10.8.50">
    <property type="match status" value="1"/>
</dbReference>
<dbReference type="Gene3D" id="4.10.910.10">
    <property type="entry name" value="30s ribosomal protein s13, domain 2"/>
    <property type="match status" value="1"/>
</dbReference>
<dbReference type="HAMAP" id="MF_01315">
    <property type="entry name" value="Ribosomal_uS13"/>
    <property type="match status" value="1"/>
</dbReference>
<dbReference type="InterPro" id="IPR027437">
    <property type="entry name" value="Rbsml_uS13_C"/>
</dbReference>
<dbReference type="InterPro" id="IPR001892">
    <property type="entry name" value="Ribosomal_uS13"/>
</dbReference>
<dbReference type="InterPro" id="IPR010979">
    <property type="entry name" value="Ribosomal_uS13-like_H2TH"/>
</dbReference>
<dbReference type="InterPro" id="IPR019980">
    <property type="entry name" value="Ribosomal_uS13_bac-type"/>
</dbReference>
<dbReference type="InterPro" id="IPR018269">
    <property type="entry name" value="Ribosomal_uS13_CS"/>
</dbReference>
<dbReference type="NCBIfam" id="TIGR03631">
    <property type="entry name" value="uS13_bact"/>
    <property type="match status" value="1"/>
</dbReference>
<dbReference type="PANTHER" id="PTHR10871">
    <property type="entry name" value="30S RIBOSOMAL PROTEIN S13/40S RIBOSOMAL PROTEIN S18"/>
    <property type="match status" value="1"/>
</dbReference>
<dbReference type="PANTHER" id="PTHR10871:SF1">
    <property type="entry name" value="SMALL RIBOSOMAL SUBUNIT PROTEIN US13M"/>
    <property type="match status" value="1"/>
</dbReference>
<dbReference type="Pfam" id="PF00416">
    <property type="entry name" value="Ribosomal_S13"/>
    <property type="match status" value="1"/>
</dbReference>
<dbReference type="PIRSF" id="PIRSF002134">
    <property type="entry name" value="Ribosomal_S13"/>
    <property type="match status" value="1"/>
</dbReference>
<dbReference type="SUPFAM" id="SSF46946">
    <property type="entry name" value="S13-like H2TH domain"/>
    <property type="match status" value="1"/>
</dbReference>
<dbReference type="PROSITE" id="PS00646">
    <property type="entry name" value="RIBOSOMAL_S13_1"/>
    <property type="match status" value="1"/>
</dbReference>
<dbReference type="PROSITE" id="PS50159">
    <property type="entry name" value="RIBOSOMAL_S13_2"/>
    <property type="match status" value="1"/>
</dbReference>
<accession>Q2S934</accession>
<feature type="chain" id="PRO_0000306617" description="Small ribosomal subunit protein uS13">
    <location>
        <begin position="1"/>
        <end position="118"/>
    </location>
</feature>
<feature type="region of interest" description="Disordered" evidence="2">
    <location>
        <begin position="91"/>
        <end position="118"/>
    </location>
</feature>
<proteinExistence type="inferred from homology"/>
<evidence type="ECO:0000255" key="1">
    <source>
        <dbReference type="HAMAP-Rule" id="MF_01315"/>
    </source>
</evidence>
<evidence type="ECO:0000256" key="2">
    <source>
        <dbReference type="SAM" id="MobiDB-lite"/>
    </source>
</evidence>
<evidence type="ECO:0000305" key="3"/>
<name>RS13_HAHCH</name>
<organism>
    <name type="scientific">Hahella chejuensis (strain KCTC 2396)</name>
    <dbReference type="NCBI Taxonomy" id="349521"/>
    <lineage>
        <taxon>Bacteria</taxon>
        <taxon>Pseudomonadati</taxon>
        <taxon>Pseudomonadota</taxon>
        <taxon>Gammaproteobacteria</taxon>
        <taxon>Oceanospirillales</taxon>
        <taxon>Hahellaceae</taxon>
        <taxon>Hahella</taxon>
    </lineage>
</organism>
<sequence length="118" mass="13504">MARIAGVNIPDNKHTEVSLTYIYGIGRTTSRGLCERTGISPQAKVKDLSEEQLDVLRNEIAKMVVEGDLRREVQMNIKRLKDLGCYRGLRHRHSLPVRGQRTKTNARTRKGPRKPIRK</sequence>
<reference key="1">
    <citation type="journal article" date="2005" name="Nucleic Acids Res.">
        <title>Genomic blueprint of Hahella chejuensis, a marine microbe producing an algicidal agent.</title>
        <authorList>
            <person name="Jeong H."/>
            <person name="Yim J.H."/>
            <person name="Lee C."/>
            <person name="Choi S.-H."/>
            <person name="Park Y.K."/>
            <person name="Yoon S.H."/>
            <person name="Hur C.-G."/>
            <person name="Kang H.-Y."/>
            <person name="Kim D."/>
            <person name="Lee H.H."/>
            <person name="Park K.H."/>
            <person name="Park S.-H."/>
            <person name="Park H.-S."/>
            <person name="Lee H.K."/>
            <person name="Oh T.K."/>
            <person name="Kim J.F."/>
        </authorList>
    </citation>
    <scope>NUCLEOTIDE SEQUENCE [LARGE SCALE GENOMIC DNA]</scope>
    <source>
        <strain>KCTC 2396</strain>
    </source>
</reference>
<gene>
    <name evidence="1" type="primary">rpsM</name>
    <name type="ordered locus">HCH_06196</name>
</gene>
<comment type="function">
    <text evidence="1">Located at the top of the head of the 30S subunit, it contacts several helices of the 16S rRNA. In the 70S ribosome it contacts the 23S rRNA (bridge B1a) and protein L5 of the 50S subunit (bridge B1b), connecting the 2 subunits; these bridges are implicated in subunit movement. Contacts the tRNAs in the A and P-sites.</text>
</comment>
<comment type="subunit">
    <text evidence="1">Part of the 30S ribosomal subunit. Forms a loose heterodimer with protein S19. Forms two bridges to the 50S subunit in the 70S ribosome.</text>
</comment>
<comment type="similarity">
    <text evidence="1">Belongs to the universal ribosomal protein uS13 family.</text>
</comment>